<accession>B0Y4Q8</accession>
<comment type="function">
    <text evidence="1">Golgi membrane protein involved in vesicular trafficking.</text>
</comment>
<comment type="subcellular location">
    <subcellularLocation>
        <location evidence="1">Golgi apparatus membrane</location>
        <topology evidence="1">Multi-pass membrane protein</topology>
    </subcellularLocation>
</comment>
<comment type="similarity">
    <text evidence="3">Belongs to the TVP23 family.</text>
</comment>
<reference key="1">
    <citation type="journal article" date="2008" name="PLoS Genet.">
        <title>Genomic islands in the pathogenic filamentous fungus Aspergillus fumigatus.</title>
        <authorList>
            <person name="Fedorova N.D."/>
            <person name="Khaldi N."/>
            <person name="Joardar V.S."/>
            <person name="Maiti R."/>
            <person name="Amedeo P."/>
            <person name="Anderson M.J."/>
            <person name="Crabtree J."/>
            <person name="Silva J.C."/>
            <person name="Badger J.H."/>
            <person name="Albarraq A."/>
            <person name="Angiuoli S."/>
            <person name="Bussey H."/>
            <person name="Bowyer P."/>
            <person name="Cotty P.J."/>
            <person name="Dyer P.S."/>
            <person name="Egan A."/>
            <person name="Galens K."/>
            <person name="Fraser-Liggett C.M."/>
            <person name="Haas B.J."/>
            <person name="Inman J.M."/>
            <person name="Kent R."/>
            <person name="Lemieux S."/>
            <person name="Malavazi I."/>
            <person name="Orvis J."/>
            <person name="Roemer T."/>
            <person name="Ronning C.M."/>
            <person name="Sundaram J.P."/>
            <person name="Sutton G."/>
            <person name="Turner G."/>
            <person name="Venter J.C."/>
            <person name="White O.R."/>
            <person name="Whitty B.R."/>
            <person name="Youngman P."/>
            <person name="Wolfe K.H."/>
            <person name="Goldman G.H."/>
            <person name="Wortman J.R."/>
            <person name="Jiang B."/>
            <person name="Denning D.W."/>
            <person name="Nierman W.C."/>
        </authorList>
    </citation>
    <scope>NUCLEOTIDE SEQUENCE [LARGE SCALE GENOMIC DNA]</scope>
    <source>
        <strain>CBS 144.89 / FGSC A1163 / CEA10</strain>
    </source>
</reference>
<protein>
    <recommendedName>
        <fullName>Golgi apparatus membrane protein tvp23</fullName>
    </recommendedName>
</protein>
<dbReference type="EMBL" id="DS499598">
    <property type="protein sequence ID" value="EDP50657.1"/>
    <property type="molecule type" value="Genomic_DNA"/>
</dbReference>
<dbReference type="EnsemblFungi" id="EDP50657">
    <property type="protein sequence ID" value="EDP50657"/>
    <property type="gene ID" value="AFUB_069940"/>
</dbReference>
<dbReference type="VEuPathDB" id="FungiDB:AFUB_069940"/>
<dbReference type="HOGENOM" id="CLU_074845_1_1_1"/>
<dbReference type="OrthoDB" id="107922at5052"/>
<dbReference type="PhylomeDB" id="B0Y4Q8"/>
<dbReference type="Proteomes" id="UP000001699">
    <property type="component" value="Unassembled WGS sequence"/>
</dbReference>
<dbReference type="GO" id="GO:0000139">
    <property type="term" value="C:Golgi membrane"/>
    <property type="evidence" value="ECO:0007669"/>
    <property type="project" value="UniProtKB-SubCell"/>
</dbReference>
<dbReference type="GO" id="GO:0009306">
    <property type="term" value="P:protein secretion"/>
    <property type="evidence" value="ECO:0007669"/>
    <property type="project" value="TreeGrafter"/>
</dbReference>
<dbReference type="GO" id="GO:0016192">
    <property type="term" value="P:vesicle-mediated transport"/>
    <property type="evidence" value="ECO:0007669"/>
    <property type="project" value="EnsemblFungi"/>
</dbReference>
<dbReference type="InterPro" id="IPR008564">
    <property type="entry name" value="TVP23-like"/>
</dbReference>
<dbReference type="PANTHER" id="PTHR13019">
    <property type="entry name" value="GOLGI APPARATUS MEMBRANE PROTEIN TVP23"/>
    <property type="match status" value="1"/>
</dbReference>
<dbReference type="PANTHER" id="PTHR13019:SF7">
    <property type="entry name" value="GOLGI APPARATUS MEMBRANE PROTEIN TVP23"/>
    <property type="match status" value="1"/>
</dbReference>
<dbReference type="Pfam" id="PF05832">
    <property type="entry name" value="DUF846"/>
    <property type="match status" value="1"/>
</dbReference>
<organism>
    <name type="scientific">Aspergillus fumigatus (strain CBS 144.89 / FGSC A1163 / CEA10)</name>
    <name type="common">Neosartorya fumigata</name>
    <dbReference type="NCBI Taxonomy" id="451804"/>
    <lineage>
        <taxon>Eukaryota</taxon>
        <taxon>Fungi</taxon>
        <taxon>Dikarya</taxon>
        <taxon>Ascomycota</taxon>
        <taxon>Pezizomycotina</taxon>
        <taxon>Eurotiomycetes</taxon>
        <taxon>Eurotiomycetidae</taxon>
        <taxon>Eurotiales</taxon>
        <taxon>Aspergillaceae</taxon>
        <taxon>Aspergillus</taxon>
        <taxon>Aspergillus subgen. Fumigati</taxon>
    </lineage>
</organism>
<proteinExistence type="inferred from homology"/>
<name>TVP23_ASPFC</name>
<evidence type="ECO:0000250" key="1"/>
<evidence type="ECO:0000255" key="2"/>
<evidence type="ECO:0000305" key="3"/>
<feature type="chain" id="PRO_0000343036" description="Golgi apparatus membrane protein tvp23">
    <location>
        <begin position="1"/>
        <end position="191"/>
    </location>
</feature>
<feature type="transmembrane region" description="Helical" evidence="2">
    <location>
        <begin position="16"/>
        <end position="36"/>
    </location>
</feature>
<feature type="transmembrane region" description="Helical" evidence="2">
    <location>
        <begin position="38"/>
        <end position="58"/>
    </location>
</feature>
<feature type="transmembrane region" description="Helical" evidence="2">
    <location>
        <begin position="110"/>
        <end position="130"/>
    </location>
</feature>
<feature type="transmembrane region" description="Helical" evidence="2">
    <location>
        <begin position="136"/>
        <end position="156"/>
    </location>
</feature>
<gene>
    <name type="primary">tvp23</name>
    <name type="ORF">AFUB_069940</name>
</gene>
<sequence length="191" mass="21484">MDQPLQAQQGELNWRLSAHPITLLFFLGFRTSALLMYLFGVLFIKNFVLVFILTLLLLSADFYYLKNIAGRRLVGLRWWNEVNTATGDSHWVFESSDPATRTISATDKRFFWLSLYVTPALWIGLAVLAIVRLSSVIWLSLVAIALVLTITNTVAFSRCDRFSQASTYANRAFGGNIVNNLAGGLLGRLFK</sequence>
<keyword id="KW-0333">Golgi apparatus</keyword>
<keyword id="KW-0472">Membrane</keyword>
<keyword id="KW-0812">Transmembrane</keyword>
<keyword id="KW-1133">Transmembrane helix</keyword>